<keyword id="KW-0002">3D-structure</keyword>
<keyword id="KW-1185">Reference proteome</keyword>
<keyword id="KW-0687">Ribonucleoprotein</keyword>
<keyword id="KW-0689">Ribosomal protein</keyword>
<keyword id="KW-0694">RNA-binding</keyword>
<keyword id="KW-0699">rRNA-binding</keyword>
<comment type="function">
    <text evidence="1">One of the primary rRNA binding proteins, this protein initially binds near the 5'-end of the 23S rRNA. It is important during the early stages of 50S assembly. It makes multiple contacts with different domains of the 23S rRNA in the assembled 50S subunit and ribosome.</text>
</comment>
<comment type="function">
    <text evidence="1">Forms part of the polypeptide exit tunnel.</text>
</comment>
<comment type="subunit">
    <text evidence="1 2">Part of the 50S ribosomal subunit.</text>
</comment>
<comment type="similarity">
    <text evidence="1">Belongs to the universal ribosomal protein uL4 family.</text>
</comment>
<name>RL4_THEKO</name>
<gene>
    <name evidence="1" type="primary">rpl4</name>
    <name type="ordered locus">TK1541</name>
</gene>
<sequence length="255" mass="28712">MKVKVFNLEGEPVEEIELPKVFSTPFRPDLIRRAVIASWTHRIQPQGRDPQAGKRRVTENIGKGHGMARVERIKTSPRFAAFVPFAVGGRRTHPPKVEKIIWEDINKKERRLAIMSAIAATANYDLVRARGHVVDNVVQIPLVVTDDLQKVFKTAQTREIFKKLGVWDDIERAKKNTKIRAGKGKMRGRRYKKAKGPLIVVAKNEGIVQGARNHPGVDVVTVDNLGVEYLAPGTHPGRLTIWTKGAIERLREIYG</sequence>
<feature type="chain" id="PRO_0000129342" description="Large ribosomal subunit protein uL4">
    <location>
        <begin position="1"/>
        <end position="255"/>
    </location>
</feature>
<organism>
    <name type="scientific">Thermococcus kodakarensis (strain ATCC BAA-918 / JCM 12380 / KOD1)</name>
    <name type="common">Pyrococcus kodakaraensis (strain KOD1)</name>
    <dbReference type="NCBI Taxonomy" id="69014"/>
    <lineage>
        <taxon>Archaea</taxon>
        <taxon>Methanobacteriati</taxon>
        <taxon>Methanobacteriota</taxon>
        <taxon>Thermococci</taxon>
        <taxon>Thermococcales</taxon>
        <taxon>Thermococcaceae</taxon>
        <taxon>Thermococcus</taxon>
    </lineage>
</organism>
<accession>Q5JDI0</accession>
<protein>
    <recommendedName>
        <fullName evidence="1">Large ribosomal subunit protein uL4</fullName>
    </recommendedName>
    <alternativeName>
        <fullName evidence="3">50S ribosomal protein L4</fullName>
    </alternativeName>
</protein>
<evidence type="ECO:0000255" key="1">
    <source>
        <dbReference type="HAMAP-Rule" id="MF_01328"/>
    </source>
</evidence>
<evidence type="ECO:0000269" key="2">
    <source>
    </source>
</evidence>
<evidence type="ECO:0000305" key="3"/>
<evidence type="ECO:0007744" key="4">
    <source>
        <dbReference type="PDB" id="6SKF"/>
    </source>
</evidence>
<evidence type="ECO:0007744" key="5">
    <source>
        <dbReference type="PDB" id="6SKG"/>
    </source>
</evidence>
<evidence type="ECO:0007744" key="6">
    <source>
        <dbReference type="PDB" id="6TH6"/>
    </source>
</evidence>
<dbReference type="EMBL" id="AP006878">
    <property type="protein sequence ID" value="BAD85730.1"/>
    <property type="molecule type" value="Genomic_DNA"/>
</dbReference>
<dbReference type="RefSeq" id="WP_011250492.1">
    <property type="nucleotide sequence ID" value="NC_006624.1"/>
</dbReference>
<dbReference type="PDB" id="6SKF">
    <property type="method" value="EM"/>
    <property type="resolution" value="2.95 A"/>
    <property type="chains" value="BE=1-255"/>
</dbReference>
<dbReference type="PDB" id="6SKG">
    <property type="method" value="EM"/>
    <property type="resolution" value="2.65 A"/>
    <property type="chains" value="BE=1-255"/>
</dbReference>
<dbReference type="PDB" id="6TH6">
    <property type="method" value="EM"/>
    <property type="resolution" value="2.55 A"/>
    <property type="chains" value="BE=1-255"/>
</dbReference>
<dbReference type="PDBsum" id="6SKF"/>
<dbReference type="PDBsum" id="6SKG"/>
<dbReference type="PDBsum" id="6TH6"/>
<dbReference type="EMDB" id="EMD-10223"/>
<dbReference type="EMDB" id="EMD-10224"/>
<dbReference type="EMDB" id="EMD-10503"/>
<dbReference type="SMR" id="Q5JDI0"/>
<dbReference type="FunCoup" id="Q5JDI0">
    <property type="interactions" value="163"/>
</dbReference>
<dbReference type="STRING" id="69014.TK1541"/>
<dbReference type="EnsemblBacteria" id="BAD85730">
    <property type="protein sequence ID" value="BAD85730"/>
    <property type="gene ID" value="TK1541"/>
</dbReference>
<dbReference type="GeneID" id="78448069"/>
<dbReference type="KEGG" id="tko:TK1541"/>
<dbReference type="PATRIC" id="fig|69014.16.peg.1501"/>
<dbReference type="eggNOG" id="arCOG04071">
    <property type="taxonomic scope" value="Archaea"/>
</dbReference>
<dbReference type="HOGENOM" id="CLU_026535_0_0_2"/>
<dbReference type="InParanoid" id="Q5JDI0"/>
<dbReference type="OrthoDB" id="10737at2157"/>
<dbReference type="PhylomeDB" id="Q5JDI0"/>
<dbReference type="Proteomes" id="UP000000536">
    <property type="component" value="Chromosome"/>
</dbReference>
<dbReference type="GO" id="GO:0022625">
    <property type="term" value="C:cytosolic large ribosomal subunit"/>
    <property type="evidence" value="ECO:0000318"/>
    <property type="project" value="GO_Central"/>
</dbReference>
<dbReference type="GO" id="GO:0003723">
    <property type="term" value="F:RNA binding"/>
    <property type="evidence" value="ECO:0000318"/>
    <property type="project" value="GO_Central"/>
</dbReference>
<dbReference type="GO" id="GO:0019843">
    <property type="term" value="F:rRNA binding"/>
    <property type="evidence" value="ECO:0007669"/>
    <property type="project" value="UniProtKB-UniRule"/>
</dbReference>
<dbReference type="GO" id="GO:0003735">
    <property type="term" value="F:structural constituent of ribosome"/>
    <property type="evidence" value="ECO:0000318"/>
    <property type="project" value="GO_Central"/>
</dbReference>
<dbReference type="GO" id="GO:0006412">
    <property type="term" value="P:translation"/>
    <property type="evidence" value="ECO:0007669"/>
    <property type="project" value="UniProtKB-UniRule"/>
</dbReference>
<dbReference type="FunFam" id="3.40.1370.10:FF:000011">
    <property type="entry name" value="50S ribosomal protein L4"/>
    <property type="match status" value="1"/>
</dbReference>
<dbReference type="Gene3D" id="3.40.1370.10">
    <property type="match status" value="1"/>
</dbReference>
<dbReference type="HAMAP" id="MF_01328_A">
    <property type="entry name" value="Ribosomal_uL4_A"/>
    <property type="match status" value="1"/>
</dbReference>
<dbReference type="InterPro" id="IPR002136">
    <property type="entry name" value="Ribosomal_uL4"/>
</dbReference>
<dbReference type="InterPro" id="IPR023574">
    <property type="entry name" value="Ribosomal_uL4_dom_sf"/>
</dbReference>
<dbReference type="InterPro" id="IPR013000">
    <property type="entry name" value="Ribosomal_uL4_euk/arc_CS"/>
</dbReference>
<dbReference type="InterPro" id="IPR045240">
    <property type="entry name" value="Ribosomal_uL4_euk/arch"/>
</dbReference>
<dbReference type="InterPro" id="IPR019970">
    <property type="entry name" value="Ribosomall_uL4-arc"/>
</dbReference>
<dbReference type="NCBIfam" id="TIGR03672">
    <property type="entry name" value="rpl4p_arch"/>
    <property type="match status" value="1"/>
</dbReference>
<dbReference type="PANTHER" id="PTHR19431">
    <property type="entry name" value="60S RIBOSOMAL PROTEIN L4"/>
    <property type="match status" value="1"/>
</dbReference>
<dbReference type="Pfam" id="PF00573">
    <property type="entry name" value="Ribosomal_L4"/>
    <property type="match status" value="1"/>
</dbReference>
<dbReference type="SUPFAM" id="SSF52166">
    <property type="entry name" value="Ribosomal protein L4"/>
    <property type="match status" value="1"/>
</dbReference>
<dbReference type="PROSITE" id="PS00939">
    <property type="entry name" value="RIBOSOMAL_L1E"/>
    <property type="match status" value="1"/>
</dbReference>
<proteinExistence type="evidence at protein level"/>
<reference key="1">
    <citation type="journal article" date="2005" name="Genome Res.">
        <title>Complete genome sequence of the hyperthermophilic archaeon Thermococcus kodakaraensis KOD1 and comparison with Pyrococcus genomes.</title>
        <authorList>
            <person name="Fukui T."/>
            <person name="Atomi H."/>
            <person name="Kanai T."/>
            <person name="Matsumi R."/>
            <person name="Fujiwara S."/>
            <person name="Imanaka T."/>
        </authorList>
    </citation>
    <scope>NUCLEOTIDE SEQUENCE [LARGE SCALE GENOMIC DNA]</scope>
    <source>
        <strain>ATCC BAA-918 / JCM 12380 / KOD1</strain>
    </source>
</reference>
<reference evidence="4 5 6" key="2">
    <citation type="journal article" date="2020" name="Nature">
        <title>Dynamic RNA acetylation revealed by quantitative cross-evolutionary mapping.</title>
        <authorList>
            <person name="Sas-Chen A."/>
            <person name="Thomas J.M."/>
            <person name="Matzov D."/>
            <person name="Taoka M."/>
            <person name="Nance K.D."/>
            <person name="Nir R."/>
            <person name="Bryson K.M."/>
            <person name="Shachar R."/>
            <person name="Liman G.L.S."/>
            <person name="Burkhart B.W."/>
            <person name="Gamage S.T."/>
            <person name="Nobe Y."/>
            <person name="Briney C.A."/>
            <person name="Levy M.J."/>
            <person name="Fuchs R.T."/>
            <person name="Robb G.B."/>
            <person name="Hartmann J."/>
            <person name="Sharma S."/>
            <person name="Lin Q."/>
            <person name="Florens L."/>
            <person name="Washburn M.P."/>
            <person name="Isobe T."/>
            <person name="Santangelo T.J."/>
            <person name="Shalev-Benami M."/>
            <person name="Meier J.L."/>
            <person name="Schwartz S."/>
        </authorList>
    </citation>
    <scope>STRUCTURE BY ELECTRON MICROSCOPY (2.55 ANGSTROMS) IN 70S RIBOSOME</scope>
    <scope>SUBUNIT</scope>
    <source>
        <strain>ATCC BAA-918 / TS559</strain>
    </source>
</reference>